<accession>B4R9R7</accession>
<gene>
    <name evidence="1" type="primary">guaA</name>
    <name type="ordered locus">PHZ_c1417</name>
</gene>
<evidence type="ECO:0000255" key="1">
    <source>
        <dbReference type="HAMAP-Rule" id="MF_00344"/>
    </source>
</evidence>
<dbReference type="EC" id="6.3.5.2" evidence="1"/>
<dbReference type="EMBL" id="CP000747">
    <property type="protein sequence ID" value="ACG77831.1"/>
    <property type="molecule type" value="Genomic_DNA"/>
</dbReference>
<dbReference type="RefSeq" id="WP_012521975.1">
    <property type="nucleotide sequence ID" value="NC_011144.1"/>
</dbReference>
<dbReference type="SMR" id="B4R9R7"/>
<dbReference type="STRING" id="450851.PHZ_c1417"/>
<dbReference type="KEGG" id="pzu:PHZ_c1417"/>
<dbReference type="eggNOG" id="COG0518">
    <property type="taxonomic scope" value="Bacteria"/>
</dbReference>
<dbReference type="eggNOG" id="COG0519">
    <property type="taxonomic scope" value="Bacteria"/>
</dbReference>
<dbReference type="HOGENOM" id="CLU_014340_0_5_5"/>
<dbReference type="OrthoDB" id="9802219at2"/>
<dbReference type="UniPathway" id="UPA00189">
    <property type="reaction ID" value="UER00296"/>
</dbReference>
<dbReference type="Proteomes" id="UP000001868">
    <property type="component" value="Chromosome"/>
</dbReference>
<dbReference type="GO" id="GO:0005829">
    <property type="term" value="C:cytosol"/>
    <property type="evidence" value="ECO:0007669"/>
    <property type="project" value="TreeGrafter"/>
</dbReference>
<dbReference type="GO" id="GO:0005524">
    <property type="term" value="F:ATP binding"/>
    <property type="evidence" value="ECO:0007669"/>
    <property type="project" value="UniProtKB-UniRule"/>
</dbReference>
<dbReference type="GO" id="GO:0003921">
    <property type="term" value="F:GMP synthase activity"/>
    <property type="evidence" value="ECO:0007669"/>
    <property type="project" value="InterPro"/>
</dbReference>
<dbReference type="CDD" id="cd01742">
    <property type="entry name" value="GATase1_GMP_Synthase"/>
    <property type="match status" value="1"/>
</dbReference>
<dbReference type="CDD" id="cd01997">
    <property type="entry name" value="GMP_synthase_C"/>
    <property type="match status" value="1"/>
</dbReference>
<dbReference type="FunFam" id="3.30.300.10:FF:000002">
    <property type="entry name" value="GMP synthase [glutamine-hydrolyzing]"/>
    <property type="match status" value="1"/>
</dbReference>
<dbReference type="FunFam" id="3.40.50.620:FF:000001">
    <property type="entry name" value="GMP synthase [glutamine-hydrolyzing]"/>
    <property type="match status" value="1"/>
</dbReference>
<dbReference type="FunFam" id="3.40.50.880:FF:000001">
    <property type="entry name" value="GMP synthase [glutamine-hydrolyzing]"/>
    <property type="match status" value="1"/>
</dbReference>
<dbReference type="Gene3D" id="3.30.300.10">
    <property type="match status" value="1"/>
</dbReference>
<dbReference type="Gene3D" id="3.40.50.880">
    <property type="match status" value="1"/>
</dbReference>
<dbReference type="Gene3D" id="3.40.50.620">
    <property type="entry name" value="HUPs"/>
    <property type="match status" value="1"/>
</dbReference>
<dbReference type="HAMAP" id="MF_00344">
    <property type="entry name" value="GMP_synthase"/>
    <property type="match status" value="1"/>
</dbReference>
<dbReference type="InterPro" id="IPR029062">
    <property type="entry name" value="Class_I_gatase-like"/>
</dbReference>
<dbReference type="InterPro" id="IPR017926">
    <property type="entry name" value="GATASE"/>
</dbReference>
<dbReference type="InterPro" id="IPR001674">
    <property type="entry name" value="GMP_synth_C"/>
</dbReference>
<dbReference type="InterPro" id="IPR004739">
    <property type="entry name" value="GMP_synth_GATase"/>
</dbReference>
<dbReference type="InterPro" id="IPR022955">
    <property type="entry name" value="GMP_synthase"/>
</dbReference>
<dbReference type="InterPro" id="IPR025777">
    <property type="entry name" value="GMPS_ATP_PPase_dom"/>
</dbReference>
<dbReference type="InterPro" id="IPR022310">
    <property type="entry name" value="NAD/GMP_synthase"/>
</dbReference>
<dbReference type="InterPro" id="IPR014729">
    <property type="entry name" value="Rossmann-like_a/b/a_fold"/>
</dbReference>
<dbReference type="NCBIfam" id="TIGR00884">
    <property type="entry name" value="guaA_Cterm"/>
    <property type="match status" value="1"/>
</dbReference>
<dbReference type="NCBIfam" id="TIGR00888">
    <property type="entry name" value="guaA_Nterm"/>
    <property type="match status" value="1"/>
</dbReference>
<dbReference type="NCBIfam" id="NF000848">
    <property type="entry name" value="PRK00074.1"/>
    <property type="match status" value="1"/>
</dbReference>
<dbReference type="PANTHER" id="PTHR11922:SF2">
    <property type="entry name" value="GMP SYNTHASE [GLUTAMINE-HYDROLYZING]"/>
    <property type="match status" value="1"/>
</dbReference>
<dbReference type="PANTHER" id="PTHR11922">
    <property type="entry name" value="GMP SYNTHASE-RELATED"/>
    <property type="match status" value="1"/>
</dbReference>
<dbReference type="Pfam" id="PF00117">
    <property type="entry name" value="GATase"/>
    <property type="match status" value="1"/>
</dbReference>
<dbReference type="Pfam" id="PF00958">
    <property type="entry name" value="GMP_synt_C"/>
    <property type="match status" value="1"/>
</dbReference>
<dbReference type="Pfam" id="PF02540">
    <property type="entry name" value="NAD_synthase"/>
    <property type="match status" value="1"/>
</dbReference>
<dbReference type="PRINTS" id="PR00097">
    <property type="entry name" value="ANTSNTHASEII"/>
</dbReference>
<dbReference type="PRINTS" id="PR00096">
    <property type="entry name" value="GATASE"/>
</dbReference>
<dbReference type="SUPFAM" id="SSF52402">
    <property type="entry name" value="Adenine nucleotide alpha hydrolases-like"/>
    <property type="match status" value="1"/>
</dbReference>
<dbReference type="SUPFAM" id="SSF52317">
    <property type="entry name" value="Class I glutamine amidotransferase-like"/>
    <property type="match status" value="1"/>
</dbReference>
<dbReference type="SUPFAM" id="SSF54810">
    <property type="entry name" value="GMP synthetase C-terminal dimerisation domain"/>
    <property type="match status" value="1"/>
</dbReference>
<dbReference type="PROSITE" id="PS51273">
    <property type="entry name" value="GATASE_TYPE_1"/>
    <property type="match status" value="1"/>
</dbReference>
<dbReference type="PROSITE" id="PS51553">
    <property type="entry name" value="GMPS_ATP_PPASE"/>
    <property type="match status" value="1"/>
</dbReference>
<name>GUAA_PHEZH</name>
<proteinExistence type="inferred from homology"/>
<organism>
    <name type="scientific">Phenylobacterium zucineum (strain HLK1)</name>
    <dbReference type="NCBI Taxonomy" id="450851"/>
    <lineage>
        <taxon>Bacteria</taxon>
        <taxon>Pseudomonadati</taxon>
        <taxon>Pseudomonadota</taxon>
        <taxon>Alphaproteobacteria</taxon>
        <taxon>Caulobacterales</taxon>
        <taxon>Caulobacteraceae</taxon>
        <taxon>Phenylobacterium</taxon>
    </lineage>
</organism>
<keyword id="KW-0067">ATP-binding</keyword>
<keyword id="KW-0315">Glutamine amidotransferase</keyword>
<keyword id="KW-0332">GMP biosynthesis</keyword>
<keyword id="KW-0436">Ligase</keyword>
<keyword id="KW-0547">Nucleotide-binding</keyword>
<keyword id="KW-0658">Purine biosynthesis</keyword>
<keyword id="KW-1185">Reference proteome</keyword>
<reference key="1">
    <citation type="journal article" date="2008" name="BMC Genomics">
        <title>Complete genome of Phenylobacterium zucineum - a novel facultative intracellular bacterium isolated from human erythroleukemia cell line K562.</title>
        <authorList>
            <person name="Luo Y."/>
            <person name="Xu X."/>
            <person name="Ding Z."/>
            <person name="Liu Z."/>
            <person name="Zhang B."/>
            <person name="Yan Z."/>
            <person name="Sun J."/>
            <person name="Hu S."/>
            <person name="Hu X."/>
        </authorList>
    </citation>
    <scope>NUCLEOTIDE SEQUENCE [LARGE SCALE GENOMIC DNA]</scope>
    <source>
        <strain>HLK1</strain>
    </source>
</reference>
<comment type="function">
    <text evidence="1">Catalyzes the synthesis of GMP from XMP.</text>
</comment>
<comment type="catalytic activity">
    <reaction evidence="1">
        <text>XMP + L-glutamine + ATP + H2O = GMP + L-glutamate + AMP + diphosphate + 2 H(+)</text>
        <dbReference type="Rhea" id="RHEA:11680"/>
        <dbReference type="ChEBI" id="CHEBI:15377"/>
        <dbReference type="ChEBI" id="CHEBI:15378"/>
        <dbReference type="ChEBI" id="CHEBI:29985"/>
        <dbReference type="ChEBI" id="CHEBI:30616"/>
        <dbReference type="ChEBI" id="CHEBI:33019"/>
        <dbReference type="ChEBI" id="CHEBI:57464"/>
        <dbReference type="ChEBI" id="CHEBI:58115"/>
        <dbReference type="ChEBI" id="CHEBI:58359"/>
        <dbReference type="ChEBI" id="CHEBI:456215"/>
        <dbReference type="EC" id="6.3.5.2"/>
    </reaction>
</comment>
<comment type="pathway">
    <text evidence="1">Purine metabolism; GMP biosynthesis; GMP from XMP (L-Gln route): step 1/1.</text>
</comment>
<comment type="subunit">
    <text evidence="1">Homodimer.</text>
</comment>
<feature type="chain" id="PRO_1000190250" description="GMP synthase [glutamine-hydrolyzing]">
    <location>
        <begin position="1"/>
        <end position="520"/>
    </location>
</feature>
<feature type="domain" description="Glutamine amidotransferase type-1" evidence="1">
    <location>
        <begin position="9"/>
        <end position="202"/>
    </location>
</feature>
<feature type="domain" description="GMPS ATP-PPase" evidence="1">
    <location>
        <begin position="203"/>
        <end position="395"/>
    </location>
</feature>
<feature type="active site" description="Nucleophile" evidence="1">
    <location>
        <position position="86"/>
    </location>
</feature>
<feature type="active site" evidence="1">
    <location>
        <position position="176"/>
    </location>
</feature>
<feature type="active site" evidence="1">
    <location>
        <position position="178"/>
    </location>
</feature>
<feature type="binding site" evidence="1">
    <location>
        <begin position="230"/>
        <end position="236"/>
    </location>
    <ligand>
        <name>ATP</name>
        <dbReference type="ChEBI" id="CHEBI:30616"/>
    </ligand>
</feature>
<protein>
    <recommendedName>
        <fullName evidence="1">GMP synthase [glutamine-hydrolyzing]</fullName>
        <ecNumber evidence="1">6.3.5.2</ecNumber>
    </recommendedName>
    <alternativeName>
        <fullName evidence="1">GMP synthetase</fullName>
    </alternativeName>
    <alternativeName>
        <fullName evidence="1">Glutamine amidotransferase</fullName>
    </alternativeName>
</protein>
<sequence length="520" mass="56794">MTDTADHEHVLIVDFGSQVTQLIARRLRESGVYCEIHPYDKVDAVLDSFRPKAVILSGGPASVHEAESPAASKRLFELDVPVLGICYGEQTMCDVLGGKVEPGTTREFGRAEIEIVRESPLLDGLGGAGHFEPVWMSHGDKVTALPMGFETVAVSEGSPFAVIADEGRRFYGIQFHPEVAHTPRGALILRNFTHKIAGLKGDWTMKAFREEAIARIRDQVGDGRIICGLSGGVDSSVAAVLIHEAIGDQLTCVFVDHGLLRLNEAEQVVTMFRDHYNIPLVHVDAAEEFLGALAGVTDPETKRKTIGRLFVEVFDREAAKIEGAAFLAQGTLYPDVIESVSARGGPSAVIKSHHNVGGLPDYMKLKLVEPLRELFKDEVRALGVELGLPPQFVGRHPFPGPGLAIRIPGEVTPERVAILQKADAIYLDEIRKAGLYDSIWQAFAVLLPVRTVGVMGDARTYDEVCALRAVTSTDGMTADFFEFPWEVLSRAATRIINEVRGINRVVYDVTSKPPGTIEWE</sequence>